<evidence type="ECO:0000255" key="1">
    <source>
        <dbReference type="HAMAP-Rule" id="MF_04066"/>
    </source>
</evidence>
<evidence type="ECO:0000256" key="2">
    <source>
        <dbReference type="SAM" id="MobiDB-lite"/>
    </source>
</evidence>
<organismHost>
    <name type="scientific">Aves</name>
    <dbReference type="NCBI Taxonomy" id="8782"/>
</organismHost>
<organismHost>
    <name type="scientific">Homo sapiens</name>
    <name type="common">Human</name>
    <dbReference type="NCBI Taxonomy" id="9606"/>
</organismHost>
<organismHost>
    <name type="scientific">Sus scrofa</name>
    <name type="common">Pig</name>
    <dbReference type="NCBI Taxonomy" id="9823"/>
</organismHost>
<gene>
    <name evidence="1" type="primary">NS</name>
</gene>
<reference key="1">
    <citation type="submission" date="2006-03" db="EMBL/GenBank/DDBJ databases">
        <title>The NIAID influenza genome sequencing project.</title>
        <authorList>
            <person name="Ghedin E."/>
            <person name="Spiro D."/>
            <person name="Sengamalay N."/>
            <person name="Zaborsky J."/>
            <person name="Feldblyum T."/>
            <person name="Subbu V."/>
            <person name="Sparenborg J."/>
            <person name="Groveman L."/>
            <person name="Halpin R."/>
            <person name="Shumway M."/>
            <person name="Sitz J."/>
            <person name="Katzel D."/>
            <person name="Koo H."/>
            <person name="Salzberg S.L."/>
            <person name="Jennings L."/>
            <person name="Smit M."/>
            <person name="Wells V."/>
            <person name="Bao Y."/>
            <person name="Bolotov P."/>
            <person name="Dernovoy D."/>
            <person name="Kiryutin B."/>
            <person name="Lipman D.J."/>
            <person name="Tatusova T."/>
        </authorList>
    </citation>
    <scope>NUCLEOTIDE SEQUENCE [GENOMIC RNA]</scope>
</reference>
<reference key="2">
    <citation type="submission" date="2006-03" db="EMBL/GenBank/DDBJ databases">
        <authorList>
            <consortium name="The NIAID Influenza Genome Sequencing Consortium"/>
        </authorList>
    </citation>
    <scope>NUCLEOTIDE SEQUENCE [GENOMIC RNA]</scope>
</reference>
<feature type="chain" id="PRO_0000372977" description="Non-structural protein 1">
    <location>
        <begin position="1"/>
        <end position="230"/>
    </location>
</feature>
<feature type="region of interest" description="RNA-binding and homodimerization" evidence="1">
    <location>
        <begin position="1"/>
        <end position="73"/>
    </location>
</feature>
<feature type="region of interest" description="CPSF4-binding" evidence="1">
    <location>
        <begin position="180"/>
        <end position="215"/>
    </location>
</feature>
<feature type="region of interest" description="Disordered" evidence="2">
    <location>
        <begin position="205"/>
        <end position="230"/>
    </location>
</feature>
<feature type="region of interest" description="PABPN1-binding" evidence="1">
    <location>
        <begin position="223"/>
        <end position="230"/>
    </location>
</feature>
<feature type="short sequence motif" description="Nuclear localization signal" evidence="1">
    <location>
        <begin position="34"/>
        <end position="38"/>
    </location>
</feature>
<feature type="short sequence motif" description="Nuclear export signal" evidence="1">
    <location>
        <begin position="137"/>
        <end position="146"/>
    </location>
</feature>
<keyword id="KW-0025">Alternative splicing</keyword>
<keyword id="KW-1262">Eukaryotic host gene expression shutoff by virus</keyword>
<keyword id="KW-1035">Host cytoplasm</keyword>
<keyword id="KW-1190">Host gene expression shutoff by virus</keyword>
<keyword id="KW-1192">Host mRNA suppression by virus</keyword>
<keyword id="KW-1048">Host nucleus</keyword>
<keyword id="KW-0945">Host-virus interaction</keyword>
<keyword id="KW-1090">Inhibition of host innate immune response by virus</keyword>
<keyword id="KW-1114">Inhibition of host interferon signaling pathway by virus</keyword>
<keyword id="KW-1102">Inhibition of host PKR by virus</keyword>
<keyword id="KW-1103">Inhibition of host pre-mRNA processing by virus</keyword>
<keyword id="KW-1088">Inhibition of host RIG-I by virus</keyword>
<keyword id="KW-1113">Inhibition of host RLR pathway by virus</keyword>
<keyword id="KW-0922">Interferon antiviral system evasion</keyword>
<keyword id="KW-0694">RNA-binding</keyword>
<keyword id="KW-0832">Ubl conjugation</keyword>
<keyword id="KW-0899">Viral immunoevasion</keyword>
<accession>Q289M1</accession>
<sequence length="230" mass="25823">MDSHTVSSFQVDCFLWHVRKQVADQDLGDAPFLDRLRRDQKSLKGRGSTLGLNIETATCVGKQIVERILKEESDEAFKMTMASALASRYLTDMTIEEMSRDWFMLMPKQKVAGPLCVRMDQAIMDKNIILKANFSVIFDRLENLTLLRAFTEEGAIVGEISPLPSLPGHTNEDVKNAIGVLIGGLEWNDNTVRVSETLQRFAWRSSNETGGPPFTPTQKRKMAGTIRSEV</sequence>
<name>NS1_I00A1</name>
<comment type="function">
    <text evidence="1">Inhibits post-transcriptional processing of cellular pre-mRNA, by binding and inhibiting two cellular proteins that are required for the 3'-end processing of cellular pre-mRNAs: the 30 kDa cleavage and polyadenylation specificity factor/CPSF4 and the poly(A)-binding protein 2/PABPN1. In turn, unprocessed 3' end pre-mRNAs accumulate in the host nucleus and are no longer exported to the cytoplasm. Cellular protein synthesis is thereby shut off very early after virus infection. Viral protein synthesis is not affected by the inhibition of the cellular 3' end processing machinery because the poly(A) tails of viral mRNAs are produced by the viral polymerase through a stuttering mechanism. Prevents the establishment of the cellular antiviral state by inhibiting TRIM25-mediated RIGI ubiquitination, which normally triggers the antiviral transduction signal that leads to the activation of type I IFN genes by transcription factors IRF3 and IRF7. Also binds poly(A) and U6 snRNA. Inhibits the integrated stress response (ISR) in the infected cell by blocking dsRNA binding by EIF2AK2/PKR and further phosphorylation of EIF2S1/EIF-2ALPHA. Stress granule formation is thus inhibited, which allows protein synthesis and viral replication.</text>
</comment>
<comment type="subunit">
    <text evidence="1">Homodimer. Interacts with host TRIM25 (via coiled coil); this interaction specifically inhibits TRIM25 multimerization and TRIM25-mediated RIGI CARD ubiquitination. Interacts with human EIF2AK2/PKR, CPSF4, IVNS1ABP and PABPN1.</text>
</comment>
<comment type="subcellular location">
    <subcellularLocation>
        <location evidence="1">Host nucleus</location>
    </subcellularLocation>
    <subcellularLocation>
        <location evidence="1">Host cytoplasm</location>
    </subcellularLocation>
    <text evidence="1">In uninfected, transfected cells, NS1 is localized in the nucleus. Only in virus infected cells, the nuclear export signal is unveiled, presumably by a viral protein, and a fraction of NS1 is exported in the cytoplasm.</text>
</comment>
<comment type="alternative products">
    <event type="alternative splicing"/>
    <isoform>
        <id>Q289M1-1</id>
        <name>NS1</name>
        <sequence type="displayed"/>
    </isoform>
    <isoform>
        <id>Q289M2-1</id>
        <name>NEP</name>
        <name>NS2</name>
        <sequence type="external"/>
    </isoform>
</comment>
<comment type="domain">
    <text evidence="1">The dsRNA-binding region is required for suppression of RNA silencing.</text>
</comment>
<comment type="PTM">
    <text evidence="1">Upon interferon induction, ISGylated via host HERC5; this results in the impairment of NS1 interaction with RNA targets due to its inability to form homodimers and to interact with host EIF2AK2/PKR.</text>
</comment>
<comment type="similarity">
    <text evidence="1">Belongs to the influenza A viruses NS1 family.</text>
</comment>
<proteinExistence type="inferred from homology"/>
<protein>
    <recommendedName>
        <fullName evidence="1">Non-structural protein 1</fullName>
        <shortName evidence="1">NS1</shortName>
    </recommendedName>
    <alternativeName>
        <fullName evidence="1">NS1A</fullName>
    </alternativeName>
</protein>
<dbReference type="EMBL" id="CY009208">
    <property type="protein sequence ID" value="ABD61523.1"/>
    <property type="molecule type" value="Genomic_RNA"/>
</dbReference>
<dbReference type="SMR" id="Q289M1"/>
<dbReference type="Proteomes" id="UP001366552">
    <property type="component" value="Genome"/>
</dbReference>
<dbReference type="GO" id="GO:0030430">
    <property type="term" value="C:host cell cytoplasm"/>
    <property type="evidence" value="ECO:0007669"/>
    <property type="project" value="UniProtKB-SubCell"/>
</dbReference>
<dbReference type="GO" id="GO:0042025">
    <property type="term" value="C:host cell nucleus"/>
    <property type="evidence" value="ECO:0007669"/>
    <property type="project" value="UniProtKB-SubCell"/>
</dbReference>
<dbReference type="GO" id="GO:0030291">
    <property type="term" value="F:protein serine/threonine kinase inhibitor activity"/>
    <property type="evidence" value="ECO:0007669"/>
    <property type="project" value="UniProtKB-KW"/>
</dbReference>
<dbReference type="GO" id="GO:0003723">
    <property type="term" value="F:RNA binding"/>
    <property type="evidence" value="ECO:0007669"/>
    <property type="project" value="UniProtKB-KW"/>
</dbReference>
<dbReference type="GO" id="GO:0039540">
    <property type="term" value="P:symbiont-mediated suppression of host cytoplasmic pattern recognition receptor signaling pathway via inhibition of RIG-I activity"/>
    <property type="evidence" value="ECO:0007669"/>
    <property type="project" value="UniProtKB-KW"/>
</dbReference>
<dbReference type="GO" id="GO:0039657">
    <property type="term" value="P:symbiont-mediated suppression of host gene expression"/>
    <property type="evidence" value="ECO:0007669"/>
    <property type="project" value="UniProtKB-KW"/>
</dbReference>
<dbReference type="GO" id="GO:0039524">
    <property type="term" value="P:symbiont-mediated suppression of host mRNA processing"/>
    <property type="evidence" value="ECO:0007669"/>
    <property type="project" value="UniProtKB-KW"/>
</dbReference>
<dbReference type="GO" id="GO:0039580">
    <property type="term" value="P:symbiont-mediated suppression of host PKR/eIFalpha signaling"/>
    <property type="evidence" value="ECO:0007669"/>
    <property type="project" value="UniProtKB-KW"/>
</dbReference>
<dbReference type="GO" id="GO:0039502">
    <property type="term" value="P:symbiont-mediated suppression of host type I interferon-mediated signaling pathway"/>
    <property type="evidence" value="ECO:0007669"/>
    <property type="project" value="UniProtKB-KW"/>
</dbReference>
<dbReference type="FunFam" id="1.10.287.10:FF:000001">
    <property type="entry name" value="Non-structural protein 1"/>
    <property type="match status" value="1"/>
</dbReference>
<dbReference type="FunFam" id="3.30.420.330:FF:000001">
    <property type="entry name" value="Non-structural protein 1"/>
    <property type="match status" value="1"/>
</dbReference>
<dbReference type="Gene3D" id="3.30.420.330">
    <property type="entry name" value="Influenza virus non-structural protein, effector domain"/>
    <property type="match status" value="1"/>
</dbReference>
<dbReference type="Gene3D" id="1.10.287.10">
    <property type="entry name" value="S15/NS1, RNA-binding"/>
    <property type="match status" value="1"/>
</dbReference>
<dbReference type="HAMAP" id="MF_04066">
    <property type="entry name" value="INFV_NS1"/>
    <property type="match status" value="1"/>
</dbReference>
<dbReference type="InterPro" id="IPR004208">
    <property type="entry name" value="NS1"/>
</dbReference>
<dbReference type="InterPro" id="IPR000256">
    <property type="entry name" value="NS1A"/>
</dbReference>
<dbReference type="InterPro" id="IPR038064">
    <property type="entry name" value="NS1A_effect_dom-like_sf"/>
</dbReference>
<dbReference type="InterPro" id="IPR009068">
    <property type="entry name" value="uS15_NS1_RNA-bd_sf"/>
</dbReference>
<dbReference type="Pfam" id="PF00600">
    <property type="entry name" value="Flu_NS1"/>
    <property type="match status" value="1"/>
</dbReference>
<dbReference type="SUPFAM" id="SSF143021">
    <property type="entry name" value="Ns1 effector domain-like"/>
    <property type="match status" value="1"/>
</dbReference>
<dbReference type="SUPFAM" id="SSF47060">
    <property type="entry name" value="S15/NS1 RNA-binding domain"/>
    <property type="match status" value="1"/>
</dbReference>
<organism>
    <name type="scientific">Influenza A virus (strain A/New Zealand:South Canterbury/35/2000 H1N1)</name>
    <dbReference type="NCBI Taxonomy" id="363066"/>
    <lineage>
        <taxon>Viruses</taxon>
        <taxon>Riboviria</taxon>
        <taxon>Orthornavirae</taxon>
        <taxon>Negarnaviricota</taxon>
        <taxon>Polyploviricotina</taxon>
        <taxon>Insthoviricetes</taxon>
        <taxon>Articulavirales</taxon>
        <taxon>Orthomyxoviridae</taxon>
        <taxon>Alphainfluenzavirus</taxon>
        <taxon>Alphainfluenzavirus influenzae</taxon>
        <taxon>Influenza A virus</taxon>
    </lineage>
</organism>